<protein>
    <recommendedName>
        <fullName evidence="1">Large ribosomal subunit protein bL28</fullName>
    </recommendedName>
    <alternativeName>
        <fullName evidence="3">50S ribosomal protein L28</fullName>
    </alternativeName>
</protein>
<gene>
    <name evidence="1" type="primary">rpmB</name>
    <name type="ordered locus">YPDSF_3855</name>
</gene>
<comment type="similarity">
    <text evidence="1">Belongs to the bacterial ribosomal protein bL28 family.</text>
</comment>
<reference key="1">
    <citation type="submission" date="2007-02" db="EMBL/GenBank/DDBJ databases">
        <title>Complete sequence of chromosome of Yersinia pestis Pestoides F.</title>
        <authorList>
            <consortium name="US DOE Joint Genome Institute"/>
            <person name="Copeland A."/>
            <person name="Lucas S."/>
            <person name="Lapidus A."/>
            <person name="Barry K."/>
            <person name="Detter J.C."/>
            <person name="Glavina del Rio T."/>
            <person name="Hammon N."/>
            <person name="Israni S."/>
            <person name="Dalin E."/>
            <person name="Tice H."/>
            <person name="Pitluck S."/>
            <person name="Di Bartolo G."/>
            <person name="Chain P."/>
            <person name="Malfatti S."/>
            <person name="Shin M."/>
            <person name="Vergez L."/>
            <person name="Schmutz J."/>
            <person name="Larimer F."/>
            <person name="Land M."/>
            <person name="Hauser L."/>
            <person name="Worsham P."/>
            <person name="Chu M."/>
            <person name="Bearden S."/>
            <person name="Garcia E."/>
            <person name="Richardson P."/>
        </authorList>
    </citation>
    <scope>NUCLEOTIDE SEQUENCE [LARGE SCALE GENOMIC DNA]</scope>
    <source>
        <strain>Pestoides F</strain>
    </source>
</reference>
<proteinExistence type="inferred from homology"/>
<keyword id="KW-0687">Ribonucleoprotein</keyword>
<keyword id="KW-0689">Ribosomal protein</keyword>
<accession>A4TSD6</accession>
<sequence length="78" mass="9027">MSRVCQVTGKRPMSGNNRSHAMNATKRRFLPNLHSHRFWVEGEKRFVTLRVSAKGMRVIDKKGIETVLAEIRARGEKY</sequence>
<name>RL28_YERPP</name>
<evidence type="ECO:0000255" key="1">
    <source>
        <dbReference type="HAMAP-Rule" id="MF_00373"/>
    </source>
</evidence>
<evidence type="ECO:0000256" key="2">
    <source>
        <dbReference type="SAM" id="MobiDB-lite"/>
    </source>
</evidence>
<evidence type="ECO:0000305" key="3"/>
<organism>
    <name type="scientific">Yersinia pestis (strain Pestoides F)</name>
    <dbReference type="NCBI Taxonomy" id="386656"/>
    <lineage>
        <taxon>Bacteria</taxon>
        <taxon>Pseudomonadati</taxon>
        <taxon>Pseudomonadota</taxon>
        <taxon>Gammaproteobacteria</taxon>
        <taxon>Enterobacterales</taxon>
        <taxon>Yersiniaceae</taxon>
        <taxon>Yersinia</taxon>
    </lineage>
</organism>
<dbReference type="EMBL" id="CP000668">
    <property type="protein sequence ID" value="ABP42198.1"/>
    <property type="molecule type" value="Genomic_DNA"/>
</dbReference>
<dbReference type="RefSeq" id="WP_002208991.1">
    <property type="nucleotide sequence ID" value="NZ_CP009715.1"/>
</dbReference>
<dbReference type="SMR" id="A4TSD6"/>
<dbReference type="GeneID" id="96663531"/>
<dbReference type="KEGG" id="ypp:YPDSF_3855"/>
<dbReference type="PATRIC" id="fig|386656.14.peg.663"/>
<dbReference type="GO" id="GO:1990904">
    <property type="term" value="C:ribonucleoprotein complex"/>
    <property type="evidence" value="ECO:0007669"/>
    <property type="project" value="UniProtKB-KW"/>
</dbReference>
<dbReference type="GO" id="GO:0005840">
    <property type="term" value="C:ribosome"/>
    <property type="evidence" value="ECO:0007669"/>
    <property type="project" value="UniProtKB-KW"/>
</dbReference>
<dbReference type="GO" id="GO:0003735">
    <property type="term" value="F:structural constituent of ribosome"/>
    <property type="evidence" value="ECO:0007669"/>
    <property type="project" value="InterPro"/>
</dbReference>
<dbReference type="GO" id="GO:0006412">
    <property type="term" value="P:translation"/>
    <property type="evidence" value="ECO:0007669"/>
    <property type="project" value="UniProtKB-UniRule"/>
</dbReference>
<dbReference type="FunFam" id="2.30.170.40:FF:000001">
    <property type="entry name" value="50S ribosomal protein L28"/>
    <property type="match status" value="1"/>
</dbReference>
<dbReference type="Gene3D" id="2.30.170.40">
    <property type="entry name" value="Ribosomal protein L28/L24"/>
    <property type="match status" value="1"/>
</dbReference>
<dbReference type="HAMAP" id="MF_00373">
    <property type="entry name" value="Ribosomal_bL28"/>
    <property type="match status" value="1"/>
</dbReference>
<dbReference type="InterPro" id="IPR050096">
    <property type="entry name" value="Bacterial_rp_bL28"/>
</dbReference>
<dbReference type="InterPro" id="IPR026569">
    <property type="entry name" value="Ribosomal_bL28"/>
</dbReference>
<dbReference type="InterPro" id="IPR034704">
    <property type="entry name" value="Ribosomal_bL28/bL31-like_sf"/>
</dbReference>
<dbReference type="InterPro" id="IPR001383">
    <property type="entry name" value="Ribosomal_bL28_bact-type"/>
</dbReference>
<dbReference type="InterPro" id="IPR037147">
    <property type="entry name" value="Ribosomal_bL28_sf"/>
</dbReference>
<dbReference type="NCBIfam" id="TIGR00009">
    <property type="entry name" value="L28"/>
    <property type="match status" value="1"/>
</dbReference>
<dbReference type="PANTHER" id="PTHR39080">
    <property type="entry name" value="50S RIBOSOMAL PROTEIN L28"/>
    <property type="match status" value="1"/>
</dbReference>
<dbReference type="PANTHER" id="PTHR39080:SF1">
    <property type="entry name" value="LARGE RIBOSOMAL SUBUNIT PROTEIN BL28A"/>
    <property type="match status" value="1"/>
</dbReference>
<dbReference type="Pfam" id="PF00830">
    <property type="entry name" value="Ribosomal_L28"/>
    <property type="match status" value="1"/>
</dbReference>
<dbReference type="SUPFAM" id="SSF143800">
    <property type="entry name" value="L28p-like"/>
    <property type="match status" value="1"/>
</dbReference>
<feature type="chain" id="PRO_1000007407" description="Large ribosomal subunit protein bL28">
    <location>
        <begin position="1"/>
        <end position="78"/>
    </location>
</feature>
<feature type="region of interest" description="Disordered" evidence="2">
    <location>
        <begin position="1"/>
        <end position="22"/>
    </location>
</feature>